<proteinExistence type="inferred from homology"/>
<evidence type="ECO:0000255" key="1">
    <source>
        <dbReference type="HAMAP-Rule" id="MF_01617"/>
    </source>
</evidence>
<protein>
    <recommendedName>
        <fullName evidence="1">Fatty acid oxidation complex subunit alpha</fullName>
    </recommendedName>
    <domain>
        <recommendedName>
            <fullName evidence="1">Enoyl-CoA hydratase/3-hydroxybutyryl-CoA epimerase</fullName>
            <ecNumber evidence="1">4.2.1.17</ecNumber>
            <ecNumber evidence="1">5.1.2.3</ecNumber>
        </recommendedName>
    </domain>
    <domain>
        <recommendedName>
            <fullName evidence="1">3-hydroxyacyl-CoA dehydrogenase</fullName>
            <ecNumber evidence="1">1.1.1.35</ecNumber>
        </recommendedName>
    </domain>
</protein>
<organism>
    <name type="scientific">Shewanella loihica (strain ATCC BAA-1088 / PV-4)</name>
    <dbReference type="NCBI Taxonomy" id="323850"/>
    <lineage>
        <taxon>Bacteria</taxon>
        <taxon>Pseudomonadati</taxon>
        <taxon>Pseudomonadota</taxon>
        <taxon>Gammaproteobacteria</taxon>
        <taxon>Alteromonadales</taxon>
        <taxon>Shewanellaceae</taxon>
        <taxon>Shewanella</taxon>
    </lineage>
</organism>
<sequence>MDKSFTLNRLDNGIAVLTMDVPGETMNTLRAEFGPEICEMLAEIKADAGIRGVVIISGKKDSFVAGADISMLDACATAEDARELSKQGHEVFFALESLSIPVVAAINGACLGGGLELALACHQRVCTDSNKTMLGLPEVQLGLLPGGGGTQRLPRLVGIAKSLDMMLTGKQLRAKQALKMGLVDDVVPESILLQTAIEMALAGARPAKKPKLSTVEKLLEGTPVGRNIIFEQALKQVNKKTQGNYPAPEKIIDCVRQGVTKGIVKGLEVEAQHFGDLVVSNESEALRSIFFATTEMKKESGAGDVSPKAVNKVMVLGGGLMGGGIASVTTTKAKIPVRVKDISEIGLSNALAYAYKLLAKGVKRRHMTPAVRDNLMALMTTTTEYKGIKDADMVVEAVFEDLNLKHQMVKDVERECGEHTIFASNTSSLPIKQIAEAAERPENVIGLHYFSPVEKMPLVEVIAHDKTSPQTIATTVAFARKQGKTPIVVKDGAGFYVNRILALYMNEAANLLLEGQSVDHLDKALVKFGFPVGPMTLLDEVGIDVGAKISPILEKELGERFKAPAAFDKLLADDRKGRKNGKGFYQYGAKSKKKLVDESVYGVLGLTPGADGEPIALAERCVVQMLNEAVRCLEEGIIASPRDGDIGAIFGIGFPPFLGGPFRYMDSLGAKHLVETLKRYQDQFGDRFAPCDRLVEMAESGSKFYE</sequence>
<name>FADJ_SHELP</name>
<gene>
    <name evidence="1" type="primary">fadJ</name>
    <name type="ordered locus">Shew_2425</name>
</gene>
<accession>A3QFP3</accession>
<reference key="1">
    <citation type="submission" date="2007-03" db="EMBL/GenBank/DDBJ databases">
        <title>Complete sequence of Shewanella loihica PV-4.</title>
        <authorList>
            <consortium name="US DOE Joint Genome Institute"/>
            <person name="Copeland A."/>
            <person name="Lucas S."/>
            <person name="Lapidus A."/>
            <person name="Barry K."/>
            <person name="Detter J.C."/>
            <person name="Glavina del Rio T."/>
            <person name="Hammon N."/>
            <person name="Israni S."/>
            <person name="Dalin E."/>
            <person name="Tice H."/>
            <person name="Pitluck S."/>
            <person name="Chain P."/>
            <person name="Malfatti S."/>
            <person name="Shin M."/>
            <person name="Vergez L."/>
            <person name="Schmutz J."/>
            <person name="Larimer F."/>
            <person name="Land M."/>
            <person name="Hauser L."/>
            <person name="Kyrpides N."/>
            <person name="Mikhailova N."/>
            <person name="Romine M.F."/>
            <person name="Serres G."/>
            <person name="Fredrickson J."/>
            <person name="Tiedje J."/>
            <person name="Richardson P."/>
        </authorList>
    </citation>
    <scope>NUCLEOTIDE SEQUENCE [LARGE SCALE GENOMIC DNA]</scope>
    <source>
        <strain>ATCC BAA-1088 / PV-4</strain>
    </source>
</reference>
<keyword id="KW-0963">Cytoplasm</keyword>
<keyword id="KW-0276">Fatty acid metabolism</keyword>
<keyword id="KW-0413">Isomerase</keyword>
<keyword id="KW-0442">Lipid degradation</keyword>
<keyword id="KW-0443">Lipid metabolism</keyword>
<keyword id="KW-0456">Lyase</keyword>
<keyword id="KW-0511">Multifunctional enzyme</keyword>
<keyword id="KW-0520">NAD</keyword>
<keyword id="KW-0560">Oxidoreductase</keyword>
<keyword id="KW-1185">Reference proteome</keyword>
<feature type="chain" id="PRO_0000323528" description="Fatty acid oxidation complex subunit alpha">
    <location>
        <begin position="1"/>
        <end position="706"/>
    </location>
</feature>
<feature type="region of interest" description="Enoyl-CoA hydratase" evidence="1">
    <location>
        <begin position="1"/>
        <end position="188"/>
    </location>
</feature>
<feature type="region of interest" description="3-hydroxyacyl-CoA dehydrogenase" evidence="1">
    <location>
        <begin position="308"/>
        <end position="706"/>
    </location>
</feature>
<feature type="site" description="Important for catalytic activity" evidence="1">
    <location>
        <position position="116"/>
    </location>
</feature>
<feature type="site" description="Important for catalytic activity" evidence="1">
    <location>
        <position position="138"/>
    </location>
</feature>
<comment type="function">
    <text evidence="1">Catalyzes the formation of a hydroxyacyl-CoA by addition of water on enoyl-CoA. Also exhibits 3-hydroxyacyl-CoA epimerase and 3-hydroxyacyl-CoA dehydrogenase activities.</text>
</comment>
<comment type="catalytic activity">
    <reaction evidence="1">
        <text>a (3S)-3-hydroxyacyl-CoA = a (2E)-enoyl-CoA + H2O</text>
        <dbReference type="Rhea" id="RHEA:16105"/>
        <dbReference type="ChEBI" id="CHEBI:15377"/>
        <dbReference type="ChEBI" id="CHEBI:57318"/>
        <dbReference type="ChEBI" id="CHEBI:58856"/>
        <dbReference type="EC" id="4.2.1.17"/>
    </reaction>
</comment>
<comment type="catalytic activity">
    <reaction evidence="1">
        <text>a 4-saturated-(3S)-3-hydroxyacyl-CoA = a (3E)-enoyl-CoA + H2O</text>
        <dbReference type="Rhea" id="RHEA:20724"/>
        <dbReference type="ChEBI" id="CHEBI:15377"/>
        <dbReference type="ChEBI" id="CHEBI:58521"/>
        <dbReference type="ChEBI" id="CHEBI:137480"/>
        <dbReference type="EC" id="4.2.1.17"/>
    </reaction>
</comment>
<comment type="catalytic activity">
    <reaction evidence="1">
        <text>a (3S)-3-hydroxyacyl-CoA + NAD(+) = a 3-oxoacyl-CoA + NADH + H(+)</text>
        <dbReference type="Rhea" id="RHEA:22432"/>
        <dbReference type="ChEBI" id="CHEBI:15378"/>
        <dbReference type="ChEBI" id="CHEBI:57318"/>
        <dbReference type="ChEBI" id="CHEBI:57540"/>
        <dbReference type="ChEBI" id="CHEBI:57945"/>
        <dbReference type="ChEBI" id="CHEBI:90726"/>
        <dbReference type="EC" id="1.1.1.35"/>
    </reaction>
</comment>
<comment type="catalytic activity">
    <reaction evidence="1">
        <text>(3S)-3-hydroxybutanoyl-CoA = (3R)-3-hydroxybutanoyl-CoA</text>
        <dbReference type="Rhea" id="RHEA:21760"/>
        <dbReference type="ChEBI" id="CHEBI:57315"/>
        <dbReference type="ChEBI" id="CHEBI:57316"/>
        <dbReference type="EC" id="5.1.2.3"/>
    </reaction>
</comment>
<comment type="pathway">
    <text evidence="1">Lipid metabolism; fatty acid beta-oxidation.</text>
</comment>
<comment type="subunit">
    <text evidence="1">Heterotetramer of two alpha chains (FadJ) and two beta chains (FadI).</text>
</comment>
<comment type="subcellular location">
    <subcellularLocation>
        <location evidence="1">Cytoplasm</location>
    </subcellularLocation>
</comment>
<comment type="similarity">
    <text evidence="1">In the N-terminal section; belongs to the enoyl-CoA hydratase/isomerase family.</text>
</comment>
<comment type="similarity">
    <text evidence="1">In the central section; belongs to the 3-hydroxyacyl-CoA dehydrogenase family.</text>
</comment>
<dbReference type="EC" id="4.2.1.17" evidence="1"/>
<dbReference type="EC" id="5.1.2.3" evidence="1"/>
<dbReference type="EC" id="1.1.1.35" evidence="1"/>
<dbReference type="EMBL" id="CP000606">
    <property type="protein sequence ID" value="ABO24291.1"/>
    <property type="molecule type" value="Genomic_DNA"/>
</dbReference>
<dbReference type="RefSeq" id="WP_011866222.1">
    <property type="nucleotide sequence ID" value="NC_009092.1"/>
</dbReference>
<dbReference type="SMR" id="A3QFP3"/>
<dbReference type="STRING" id="323850.Shew_2425"/>
<dbReference type="KEGG" id="slo:Shew_2425"/>
<dbReference type="eggNOG" id="COG1024">
    <property type="taxonomic scope" value="Bacteria"/>
</dbReference>
<dbReference type="eggNOG" id="COG1250">
    <property type="taxonomic scope" value="Bacteria"/>
</dbReference>
<dbReference type="HOGENOM" id="CLU_009834_16_1_6"/>
<dbReference type="OrthoDB" id="5389341at2"/>
<dbReference type="UniPathway" id="UPA00659"/>
<dbReference type="Proteomes" id="UP000001558">
    <property type="component" value="Chromosome"/>
</dbReference>
<dbReference type="GO" id="GO:0005737">
    <property type="term" value="C:cytoplasm"/>
    <property type="evidence" value="ECO:0007669"/>
    <property type="project" value="UniProtKB-SubCell"/>
</dbReference>
<dbReference type="GO" id="GO:0008692">
    <property type="term" value="F:3-hydroxybutyryl-CoA epimerase activity"/>
    <property type="evidence" value="ECO:0007669"/>
    <property type="project" value="UniProtKB-UniRule"/>
</dbReference>
<dbReference type="GO" id="GO:0004300">
    <property type="term" value="F:enoyl-CoA hydratase activity"/>
    <property type="evidence" value="ECO:0007669"/>
    <property type="project" value="UniProtKB-UniRule"/>
</dbReference>
<dbReference type="GO" id="GO:0016509">
    <property type="term" value="F:long-chain-3-hydroxyacyl-CoA dehydrogenase activity"/>
    <property type="evidence" value="ECO:0007669"/>
    <property type="project" value="TreeGrafter"/>
</dbReference>
<dbReference type="GO" id="GO:0070403">
    <property type="term" value="F:NAD+ binding"/>
    <property type="evidence" value="ECO:0007669"/>
    <property type="project" value="InterPro"/>
</dbReference>
<dbReference type="GO" id="GO:0006635">
    <property type="term" value="P:fatty acid beta-oxidation"/>
    <property type="evidence" value="ECO:0007669"/>
    <property type="project" value="UniProtKB-UniRule"/>
</dbReference>
<dbReference type="CDD" id="cd06558">
    <property type="entry name" value="crotonase-like"/>
    <property type="match status" value="1"/>
</dbReference>
<dbReference type="FunFam" id="3.90.226.10:FF:000011">
    <property type="entry name" value="Fatty acid oxidation complex subunit alpha"/>
    <property type="match status" value="1"/>
</dbReference>
<dbReference type="FunFam" id="3.40.50.720:FF:000009">
    <property type="entry name" value="Fatty oxidation complex, alpha subunit"/>
    <property type="match status" value="1"/>
</dbReference>
<dbReference type="Gene3D" id="1.10.1040.50">
    <property type="match status" value="1"/>
</dbReference>
<dbReference type="Gene3D" id="3.90.226.10">
    <property type="entry name" value="2-enoyl-CoA Hydratase, Chain A, domain 1"/>
    <property type="match status" value="1"/>
</dbReference>
<dbReference type="Gene3D" id="3.40.50.720">
    <property type="entry name" value="NAD(P)-binding Rossmann-like Domain"/>
    <property type="match status" value="1"/>
</dbReference>
<dbReference type="HAMAP" id="MF_01617">
    <property type="entry name" value="FadJ"/>
    <property type="match status" value="1"/>
</dbReference>
<dbReference type="InterPro" id="IPR006176">
    <property type="entry name" value="3-OHacyl-CoA_DH_NAD-bd"/>
</dbReference>
<dbReference type="InterPro" id="IPR006108">
    <property type="entry name" value="3HC_DH_C"/>
</dbReference>
<dbReference type="InterPro" id="IPR008927">
    <property type="entry name" value="6-PGluconate_DH-like_C_sf"/>
</dbReference>
<dbReference type="InterPro" id="IPR029045">
    <property type="entry name" value="ClpP/crotonase-like_dom_sf"/>
</dbReference>
<dbReference type="InterPro" id="IPR001753">
    <property type="entry name" value="Enoyl-CoA_hydra/iso"/>
</dbReference>
<dbReference type="InterPro" id="IPR050136">
    <property type="entry name" value="FA_oxidation_alpha_subunit"/>
</dbReference>
<dbReference type="InterPro" id="IPR012802">
    <property type="entry name" value="FadJ"/>
</dbReference>
<dbReference type="InterPro" id="IPR036291">
    <property type="entry name" value="NAD(P)-bd_dom_sf"/>
</dbReference>
<dbReference type="NCBIfam" id="TIGR02440">
    <property type="entry name" value="FadJ"/>
    <property type="match status" value="1"/>
</dbReference>
<dbReference type="NCBIfam" id="NF008363">
    <property type="entry name" value="PRK11154.1"/>
    <property type="match status" value="1"/>
</dbReference>
<dbReference type="PANTHER" id="PTHR43612">
    <property type="entry name" value="TRIFUNCTIONAL ENZYME SUBUNIT ALPHA"/>
    <property type="match status" value="1"/>
</dbReference>
<dbReference type="PANTHER" id="PTHR43612:SF3">
    <property type="entry name" value="TRIFUNCTIONAL ENZYME SUBUNIT ALPHA, MITOCHONDRIAL"/>
    <property type="match status" value="1"/>
</dbReference>
<dbReference type="Pfam" id="PF00725">
    <property type="entry name" value="3HCDH"/>
    <property type="match status" value="2"/>
</dbReference>
<dbReference type="Pfam" id="PF02737">
    <property type="entry name" value="3HCDH_N"/>
    <property type="match status" value="1"/>
</dbReference>
<dbReference type="Pfam" id="PF00378">
    <property type="entry name" value="ECH_1"/>
    <property type="match status" value="1"/>
</dbReference>
<dbReference type="SUPFAM" id="SSF48179">
    <property type="entry name" value="6-phosphogluconate dehydrogenase C-terminal domain-like"/>
    <property type="match status" value="2"/>
</dbReference>
<dbReference type="SUPFAM" id="SSF52096">
    <property type="entry name" value="ClpP/crotonase"/>
    <property type="match status" value="1"/>
</dbReference>
<dbReference type="SUPFAM" id="SSF51735">
    <property type="entry name" value="NAD(P)-binding Rossmann-fold domains"/>
    <property type="match status" value="1"/>
</dbReference>